<dbReference type="EC" id="2.1.1.-" evidence="3 4 5"/>
<dbReference type="EMBL" id="KM595305">
    <property type="protein sequence ID" value="AJG44384.1"/>
    <property type="molecule type" value="Genomic_DNA"/>
</dbReference>
<dbReference type="PDB" id="8XTE">
    <property type="method" value="X-ray"/>
    <property type="resolution" value="1.99 A"/>
    <property type="chains" value="A/B/C/D/E/F=3-398"/>
</dbReference>
<dbReference type="PDB" id="8XTF">
    <property type="method" value="X-ray"/>
    <property type="resolution" value="2.13 A"/>
    <property type="chains" value="A=3-398"/>
</dbReference>
<dbReference type="PDB" id="8XTG">
    <property type="method" value="X-ray"/>
    <property type="resolution" value="2.00 A"/>
    <property type="chains" value="A/B/C/D/E/F=3-398"/>
</dbReference>
<dbReference type="PDBsum" id="8XTE"/>
<dbReference type="PDBsum" id="8XTF"/>
<dbReference type="PDBsum" id="8XTG"/>
<dbReference type="SMR" id="A0A0B5L781"/>
<dbReference type="OrthoDB" id="1535081at2759"/>
<dbReference type="UniPathway" id="UPA00213"/>
<dbReference type="GO" id="GO:0005829">
    <property type="term" value="C:cytosol"/>
    <property type="evidence" value="ECO:0000314"/>
    <property type="project" value="GO_Central"/>
</dbReference>
<dbReference type="GO" id="GO:0008168">
    <property type="term" value="F:methyltransferase activity"/>
    <property type="evidence" value="ECO:0000314"/>
    <property type="project" value="GO_Central"/>
</dbReference>
<dbReference type="GO" id="GO:0008171">
    <property type="term" value="F:O-methyltransferase activity"/>
    <property type="evidence" value="ECO:0000314"/>
    <property type="project" value="UniProt"/>
</dbReference>
<dbReference type="GO" id="GO:0016218">
    <property type="term" value="F:polyketide synthase activity"/>
    <property type="evidence" value="ECO:0000314"/>
    <property type="project" value="UniProt"/>
</dbReference>
<dbReference type="GO" id="GO:0032259">
    <property type="term" value="P:methylation"/>
    <property type="evidence" value="ECO:0007669"/>
    <property type="project" value="UniProtKB-KW"/>
</dbReference>
<dbReference type="GO" id="GO:0140722">
    <property type="term" value="P:mycophenolic acid biosynthetic process"/>
    <property type="evidence" value="ECO:0000314"/>
    <property type="project" value="GO_Central"/>
</dbReference>
<dbReference type="GO" id="GO:0016114">
    <property type="term" value="P:terpenoid biosynthetic process"/>
    <property type="evidence" value="ECO:0007669"/>
    <property type="project" value="UniProtKB-UniPathway"/>
</dbReference>
<dbReference type="Gene3D" id="3.40.50.150">
    <property type="entry name" value="Vaccinia Virus protein VP39"/>
    <property type="match status" value="1"/>
</dbReference>
<dbReference type="Gene3D" id="1.10.10.10">
    <property type="entry name" value="Winged helix-like DNA-binding domain superfamily/Winged helix DNA-binding domain"/>
    <property type="match status" value="1"/>
</dbReference>
<dbReference type="InterPro" id="IPR016461">
    <property type="entry name" value="COMT-like"/>
</dbReference>
<dbReference type="InterPro" id="IPR001077">
    <property type="entry name" value="O_MeTrfase_dom"/>
</dbReference>
<dbReference type="InterPro" id="IPR029063">
    <property type="entry name" value="SAM-dependent_MTases_sf"/>
</dbReference>
<dbReference type="InterPro" id="IPR036388">
    <property type="entry name" value="WH-like_DNA-bd_sf"/>
</dbReference>
<dbReference type="InterPro" id="IPR036390">
    <property type="entry name" value="WH_DNA-bd_sf"/>
</dbReference>
<dbReference type="PANTHER" id="PTHR43712:SF1">
    <property type="entry name" value="HYPOTHETICAL O-METHYLTRANSFERASE (EUROFUNG)-RELATED"/>
    <property type="match status" value="1"/>
</dbReference>
<dbReference type="PANTHER" id="PTHR43712">
    <property type="entry name" value="PUTATIVE (AFU_ORTHOLOGUE AFUA_4G14580)-RELATED"/>
    <property type="match status" value="1"/>
</dbReference>
<dbReference type="Pfam" id="PF00891">
    <property type="entry name" value="Methyltransf_2"/>
    <property type="match status" value="1"/>
</dbReference>
<dbReference type="PIRSF" id="PIRSF005739">
    <property type="entry name" value="O-mtase"/>
    <property type="match status" value="1"/>
</dbReference>
<dbReference type="SUPFAM" id="SSF53335">
    <property type="entry name" value="S-adenosyl-L-methionine-dependent methyltransferases"/>
    <property type="match status" value="1"/>
</dbReference>
<dbReference type="SUPFAM" id="SSF46785">
    <property type="entry name" value="Winged helix' DNA-binding domain"/>
    <property type="match status" value="1"/>
</dbReference>
<dbReference type="PROSITE" id="PS00092">
    <property type="entry name" value="N6_MTASE"/>
    <property type="match status" value="1"/>
</dbReference>
<dbReference type="PROSITE" id="PS51683">
    <property type="entry name" value="SAM_OMT_II"/>
    <property type="match status" value="1"/>
</dbReference>
<evidence type="ECO:0000250" key="1">
    <source>
        <dbReference type="UniProtKB" id="F1DBB3"/>
    </source>
</evidence>
<evidence type="ECO:0000255" key="2">
    <source>
        <dbReference type="PROSITE-ProRule" id="PRU01020"/>
    </source>
</evidence>
<evidence type="ECO:0000269" key="3">
    <source>
    </source>
</evidence>
<evidence type="ECO:0000269" key="4">
    <source>
    </source>
</evidence>
<evidence type="ECO:0000269" key="5">
    <source>
    </source>
</evidence>
<evidence type="ECO:0000303" key="6">
    <source>
    </source>
</evidence>
<evidence type="ECO:0000305" key="7"/>
<evidence type="ECO:0007744" key="8">
    <source>
        <dbReference type="PDB" id="8XTE"/>
    </source>
</evidence>
<evidence type="ECO:0007744" key="9">
    <source>
        <dbReference type="PDB" id="8XTF"/>
    </source>
</evidence>
<evidence type="ECO:0007744" key="10">
    <source>
        <dbReference type="PDB" id="8XTG"/>
    </source>
</evidence>
<comment type="function">
    <text evidence="3 4 5">O-methyltransferase; part of the gene cluster that mediates the biosynthesis of mycophenolic acid (MPA), the first isolated antibiotic natural product in the world obtained from a culture of Penicillium brevicompactum in 1893 (PubMed:25630520, PubMed:31209052). MpaG' catalyzes the 5-O-methylation of three precursors in MPA biosynthesis including demethylmycophenolic acid (DMMPA), 4-farnesyl-3,5-dihydroxy-6-methylphthalide (FDHMP), and an intermediate containing three fewer carbon atoms compared to FDHMP (FDHMP-3C) with different catalytic efficiencies (PubMed:25630520, PubMed:31209052, PubMed:39150221). The first step of the pathway is the synthesis of 5-methylorsellinic acid (5MOA) by the cytosolic polyketide synthase mpaC. 5MOA is then converted to the phthalide compound 5,7-dihydroxy-4,6-dimethylphthalide (DHMP) by the endoplasmic reticulum-bound cytochrome P450 monooxygenase mpaDE. MpaDE first catalyzes hydroxylation of 5-MOA to 4,6-dihydroxy-2-(hydroxymethyl)-3-methylbenzoic acid (DHMB). MpaDE then acts as a lactone synthase that catalyzes the ring closure to convert DHMB into DHMP. The next step is the prenylation of DHMP by the Golgi apparatus-associated prenyltransferase mpaA to yield farnesyl-DHMP (FDHMP). The ER-bound oxygenase mpaB then mediates the oxidative cleavage the C19-C20 double bond in FDHMP to yield FDHMP-3C via a mycophenolic aldehyde intermediate. The O-methyltransferase mpaG catalyzes the methylation of FDHMP-3C to yield MFDHMP-3C. MpaG and mpaB can also switch the order in which they act and, in this case, the conversion of FDHMP to MFDHMP-3C can take place via 5-O-methyl-FDHMP (MFDHMP). After the cytosolic methylation of FDHMP-3C, MFDHMP-3C enters into peroxisomes probably via free diffusion due to its low molecular weight. Upon a peroxisomal CoA ligation reaction, catalyzed by a beta-oxidation component enzyme acyl-CoA ligase ACL891, MFDHMP-3C-CoA would then be restricted to peroxisomes for the following beta-oxidation pathway steps. The peroxisomal beta-oxidation machinery than converts MFDHMP-3C-CoA into MPA_CoA, via a beta-oxidation chain-shortening process. Finally mpaH acts as a peroxisomal acyl-CoA hydrolase with high substrate specificity toward MPA-CoA to release the final product MPA. MpaH can also hydrolyze DMMPA-CoA to release demethylmycophenolic acid (DMMPA) that is further converted to MPA by mpaG (PubMed:31209052, PubMed:39150221).</text>
</comment>
<comment type="catalytic activity">
    <reaction evidence="3 4 5">
        <text>(4E,8E)-10-(4,6-dihydroxy-7-methyl-3-oxo-1,3-dihydro-2-benzofuran-5-yl)-4,8-dimethyldeca-4,8-dienoate + S-adenosyl-L-methionine = (4E,8E)-10-(4-hydroxy-6-methoxy-7-methyl-3-oxo-1,3-dihydro-2-benzofuran-5-yl)-4,8-dimethyldeca-4,8-dienoate + S-adenosyl-L-homocysteine + H(+)</text>
        <dbReference type="Rhea" id="RHEA:66696"/>
        <dbReference type="ChEBI" id="CHEBI:15378"/>
        <dbReference type="ChEBI" id="CHEBI:57856"/>
        <dbReference type="ChEBI" id="CHEBI:59789"/>
        <dbReference type="ChEBI" id="CHEBI:167389"/>
        <dbReference type="ChEBI" id="CHEBI:167390"/>
    </reaction>
    <physiologicalReaction direction="left-to-right" evidence="3 4 5">
        <dbReference type="Rhea" id="RHEA:66697"/>
    </physiologicalReaction>
</comment>
<comment type="catalytic activity">
    <reaction evidence="5">
        <text>4-farnesyl-3,5-dihydroxy-6-methylphthalide + S-adenosyl-L-methionine = 4-farnesyl-3,5-dihydroxy-6-methoxylphthalide + S-adenosyl-L-homocysteine + H(+)</text>
        <dbReference type="Rhea" id="RHEA:81847"/>
        <dbReference type="ChEBI" id="CHEBI:15378"/>
        <dbReference type="ChEBI" id="CHEBI:57856"/>
        <dbReference type="ChEBI" id="CHEBI:59789"/>
        <dbReference type="ChEBI" id="CHEBI:167386"/>
        <dbReference type="ChEBI" id="CHEBI:231833"/>
    </reaction>
    <physiologicalReaction direction="left-to-right" evidence="5">
        <dbReference type="Rhea" id="RHEA:81848"/>
    </physiologicalReaction>
</comment>
<comment type="catalytic activity">
    <reaction evidence="5">
        <text>6-O-desmethylmycophenolate + S-adenosyl-L-methionine = mycophenolate + S-adenosyl-L-homocysteine + H(+)</text>
        <dbReference type="Rhea" id="RHEA:81843"/>
        <dbReference type="ChEBI" id="CHEBI:15378"/>
        <dbReference type="ChEBI" id="CHEBI:57856"/>
        <dbReference type="ChEBI" id="CHEBI:59789"/>
        <dbReference type="ChEBI" id="CHEBI:62932"/>
        <dbReference type="ChEBI" id="CHEBI:231832"/>
    </reaction>
    <physiologicalReaction direction="left-to-right" evidence="5">
        <dbReference type="Rhea" id="RHEA:81844"/>
    </physiologicalReaction>
</comment>
<comment type="biophysicochemical properties">
    <kinetics>
        <KM evidence="5">39.4 uM for DMMPA</KM>
        <KM evidence="5">14.6 uM for FDHMP-3C</KM>
        <KM evidence="5">58.2 uM for FDHMP</KM>
    </kinetics>
</comment>
<comment type="pathway">
    <text evidence="4">Secondary metabolite biosynthesis; terpenoid biosynthesis.</text>
</comment>
<comment type="subunit">
    <text evidence="5">Homodimer.</text>
</comment>
<comment type="subcellular location">
    <subcellularLocation>
        <location evidence="4">Cytoplasm</location>
        <location evidence="4">Cytosol</location>
    </subcellularLocation>
</comment>
<comment type="similarity">
    <text evidence="7">Belongs to the class I-like SAM-binding methyltransferase superfamily. Cation-independent O-methyltransferase family.</text>
</comment>
<feature type="chain" id="PRO_0000451894" description="O-methyltransferase mpaG'">
    <location>
        <begin position="1"/>
        <end position="398"/>
    </location>
</feature>
<feature type="active site" description="Proton acceptor" evidence="2 5">
    <location>
        <position position="306"/>
    </location>
</feature>
<feature type="active site" evidence="1">
    <location>
        <position position="335"/>
    </location>
</feature>
<feature type="active site" evidence="5">
    <location>
        <position position="362"/>
    </location>
</feature>
<feature type="binding site" evidence="5 9">
    <location>
        <position position="144"/>
    </location>
    <ligand>
        <name>(4E,8E)-10-(4,6-dihydroxy-7-methyl-3-oxo-1,3-dihydro-2-benzofuran-5-yl)-4,8-dimethyldeca-4,8-dienoate</name>
        <dbReference type="ChEBI" id="CHEBI:167389"/>
    </ligand>
</feature>
<feature type="binding site" evidence="5 8">
    <location>
        <position position="144"/>
    </location>
    <ligand>
        <name>4-farnesyl-3,5-dihydroxy-6-methylphthalide</name>
        <dbReference type="ChEBI" id="CHEBI:167386"/>
    </ligand>
</feature>
<feature type="binding site" evidence="5 10">
    <location>
        <position position="144"/>
    </location>
    <ligand>
        <name>6-O-desmethylmycophenolate</name>
        <dbReference type="ChEBI" id="CHEBI:231832"/>
    </ligand>
</feature>
<feature type="binding site" evidence="5 8 9 10">
    <location>
        <position position="197"/>
    </location>
    <ligand>
        <name>S-adenosyl-L-homocysteine</name>
        <dbReference type="ChEBI" id="CHEBI:57856"/>
    </ligand>
</feature>
<feature type="binding site" evidence="5 9">
    <location>
        <position position="199"/>
    </location>
    <ligand>
        <name>(4E,8E)-10-(4,6-dihydroxy-7-methyl-3-oxo-1,3-dihydro-2-benzofuran-5-yl)-4,8-dimethyldeca-4,8-dienoate</name>
        <dbReference type="ChEBI" id="CHEBI:167389"/>
    </ligand>
</feature>
<feature type="binding site" evidence="5 8">
    <location>
        <position position="199"/>
    </location>
    <ligand>
        <name>4-farnesyl-3,5-dihydroxy-6-methylphthalide</name>
        <dbReference type="ChEBI" id="CHEBI:167386"/>
    </ligand>
</feature>
<feature type="binding site" evidence="5 10">
    <location>
        <position position="199"/>
    </location>
    <ligand>
        <name>6-O-desmethylmycophenolate</name>
        <dbReference type="ChEBI" id="CHEBI:231832"/>
    </ligand>
</feature>
<feature type="binding site" evidence="5 8 9 10">
    <location>
        <position position="203"/>
    </location>
    <ligand>
        <name>S-adenosyl-L-homocysteine</name>
        <dbReference type="ChEBI" id="CHEBI:57856"/>
    </ligand>
</feature>
<feature type="binding site" evidence="5 8 9 10">
    <location>
        <position position="237"/>
    </location>
    <ligand>
        <name>S-adenosyl-L-homocysteine</name>
        <dbReference type="ChEBI" id="CHEBI:57856"/>
    </ligand>
</feature>
<feature type="binding site" evidence="5 8 9 10">
    <location>
        <position position="239"/>
    </location>
    <ligand>
        <name>S-adenosyl-L-homocysteine</name>
        <dbReference type="ChEBI" id="CHEBI:57856"/>
    </ligand>
</feature>
<feature type="binding site" evidence="5 8 9 10">
    <location>
        <position position="244"/>
    </location>
    <ligand>
        <name>S-adenosyl-L-homocysteine</name>
        <dbReference type="ChEBI" id="CHEBI:57856"/>
    </ligand>
</feature>
<feature type="binding site" evidence="5 8 9 10">
    <location>
        <position position="245"/>
    </location>
    <ligand>
        <name>S-adenosyl-L-homocysteine</name>
        <dbReference type="ChEBI" id="CHEBI:57856"/>
    </ligand>
</feature>
<feature type="binding site" evidence="5 8 9 10">
    <location>
        <position position="264"/>
    </location>
    <ligand>
        <name>S-adenosyl-L-homocysteine</name>
        <dbReference type="ChEBI" id="CHEBI:57856"/>
    </ligand>
</feature>
<feature type="binding site" evidence="2">
    <location>
        <position position="264"/>
    </location>
    <ligand>
        <name>S-adenosyl-L-methionine</name>
        <dbReference type="ChEBI" id="CHEBI:59789"/>
    </ligand>
</feature>
<feature type="binding site" evidence="5 9">
    <location>
        <position position="265"/>
    </location>
    <ligand>
        <name>(4E,8E)-10-(4,6-dihydroxy-7-methyl-3-oxo-1,3-dihydro-2-benzofuran-5-yl)-4,8-dimethyldeca-4,8-dienoate</name>
        <dbReference type="ChEBI" id="CHEBI:167389"/>
    </ligand>
</feature>
<feature type="binding site" evidence="5 10">
    <location>
        <position position="265"/>
    </location>
    <ligand>
        <name>6-O-desmethylmycophenolate</name>
        <dbReference type="ChEBI" id="CHEBI:231832"/>
    </ligand>
</feature>
<feature type="binding site" evidence="5 8 9 10">
    <location>
        <position position="265"/>
    </location>
    <ligand>
        <name>S-adenosyl-L-homocysteine</name>
        <dbReference type="ChEBI" id="CHEBI:57856"/>
    </ligand>
</feature>
<feature type="binding site" evidence="5 9">
    <location>
        <position position="267"/>
    </location>
    <ligand>
        <name>(4E,8E)-10-(4,6-dihydroxy-7-methyl-3-oxo-1,3-dihydro-2-benzofuran-5-yl)-4,8-dimethyldeca-4,8-dienoate</name>
        <dbReference type="ChEBI" id="CHEBI:167389"/>
    </ligand>
</feature>
<feature type="binding site" evidence="5 8 9 10">
    <location>
        <position position="286"/>
    </location>
    <ligand>
        <name>S-adenosyl-L-homocysteine</name>
        <dbReference type="ChEBI" id="CHEBI:57856"/>
    </ligand>
</feature>
<feature type="binding site" evidence="5 8 9 10">
    <location>
        <position position="287"/>
    </location>
    <ligand>
        <name>S-adenosyl-L-homocysteine</name>
        <dbReference type="ChEBI" id="CHEBI:57856"/>
    </ligand>
</feature>
<feature type="binding site" evidence="5 8 9 10">
    <location>
        <position position="302"/>
    </location>
    <ligand>
        <name>S-adenosyl-L-homocysteine</name>
        <dbReference type="ChEBI" id="CHEBI:57856"/>
    </ligand>
</feature>
<feature type="binding site" evidence="5 9">
    <location>
        <position position="303"/>
    </location>
    <ligand>
        <name>(4E,8E)-10-(4,6-dihydroxy-7-methyl-3-oxo-1,3-dihydro-2-benzofuran-5-yl)-4,8-dimethyldeca-4,8-dienoate</name>
        <dbReference type="ChEBI" id="CHEBI:167389"/>
    </ligand>
</feature>
<feature type="binding site" evidence="5 8">
    <location>
        <position position="303"/>
    </location>
    <ligand>
        <name>4-farnesyl-3,5-dihydroxy-6-methylphthalide</name>
        <dbReference type="ChEBI" id="CHEBI:167386"/>
    </ligand>
</feature>
<feature type="binding site" evidence="5 10">
    <location>
        <position position="303"/>
    </location>
    <ligand>
        <name>6-O-desmethylmycophenolate</name>
        <dbReference type="ChEBI" id="CHEBI:231832"/>
    </ligand>
</feature>
<feature type="mutagenesis site" description="Completely abolishes the activity towards FDHMP-3C." evidence="5">
    <original>F</original>
    <variation>A</variation>
    <location>
        <position position="196"/>
    </location>
</feature>
<feature type="mutagenesis site" description="Impairs enzymatic activity towards FDHMP-3C, with only 35.6% activity retained, and R265A only exhibited a 0.39-fold decreased activity towards 6-O-desmethylmycophenolate." evidence="5">
    <original>R</original>
    <variation>A</variation>
    <location>
        <position position="265"/>
    </location>
</feature>
<feature type="mutagenesis site" description="Opens the substrate entrance, and leads to higher catalytic efficiencies towards DMMPA, FDHMP-3C and FDHMP." evidence="5">
    <original>Q</original>
    <variation>A</variation>
    <location>
        <position position="267"/>
    </location>
</feature>
<feature type="mutagenesis site" description="Loses a majority of its activity against the three substrates DMMPA, FDHMP-3C and FDHMP." evidence="5">
    <original>Q</original>
    <variation>W</variation>
    <location>
        <position position="267"/>
    </location>
</feature>
<feature type="mutagenesis site" description="Completely abolishes the methyltransferase activity." evidence="5">
    <original>H</original>
    <variation>A</variation>
    <location>
        <position position="306"/>
    </location>
</feature>
<feature type="mutagenesis site" description="Leads to a significant decrease in methylation activity." evidence="5">
    <original>E</original>
    <variation>A</variation>
    <location>
        <position position="362"/>
    </location>
</feature>
<accession>A0A0B5L781</accession>
<reference key="1">
    <citation type="journal article" date="2015" name="ChemBioChem">
        <title>Functional characterization of MpaG', the O-methyltransferase involved in the biosynthesis of mycophenolic acid.</title>
        <authorList>
            <person name="Zhang W."/>
            <person name="Cao S."/>
            <person name="Qiu L."/>
            <person name="Qi F."/>
            <person name="Li Z."/>
            <person name="Yang Y."/>
            <person name="Huang S."/>
            <person name="Bai F."/>
            <person name="Liu C."/>
            <person name="Wan X."/>
            <person name="Li S."/>
        </authorList>
    </citation>
    <scope>NUCLEOTIDE SEQUENCE [GENOMIC DNA]</scope>
    <scope>FUNCTION</scope>
    <scope>CATALYTIC ACTIVITY</scope>
    <scope>PATHWAY</scope>
    <source>
        <strain>NRRL864</strain>
    </source>
</reference>
<reference key="2">
    <citation type="journal article" date="2019" name="Proc. Natl. Acad. Sci. U.S.A.">
        <title>Compartmentalized biosynthesis of mycophenolic acid.</title>
        <authorList>
            <person name="Zhang W."/>
            <person name="Du L."/>
            <person name="Qu Z."/>
            <person name="Zhang X."/>
            <person name="Li F."/>
            <person name="Li Z."/>
            <person name="Qi F."/>
            <person name="Wang X."/>
            <person name="Jiang Y."/>
            <person name="Men P."/>
            <person name="Sun J."/>
            <person name="Cao S."/>
            <person name="Geng C."/>
            <person name="Qi F."/>
            <person name="Wan X."/>
            <person name="Liu C."/>
            <person name="Li S."/>
        </authorList>
    </citation>
    <scope>FUNCTION</scope>
    <scope>SUBCELLULAR LOCATION</scope>
    <scope>CATALYTIC ACTIVITY</scope>
</reference>
<reference evidence="8 9 10" key="3">
    <citation type="journal article" date="2024" name="Protein Sci.">
        <title>Structural basis for substrate flexibility of the O-methyltransferase MpaG' involved in mycophenolic acid biosynthesis.</title>
        <authorList>
            <person name="You C."/>
            <person name="Pan Y."/>
            <person name="Liu R."/>
            <person name="Li S."/>
            <person name="Feng Y."/>
        </authorList>
    </citation>
    <scope>X-RAY CRYSTALLOGRAPHY (1.99 ANGSTROMS) OF 3-398 IN COMPLEX WITH 4-FARNESYL-3,5-DIHYDROXY-6-METHYLPHTHALIDE; 4-FARNESYL-3,5-DIHYDROXY-6-METHYLPHTHALIDE-3C; O-DESMETHYL MYCOPHENOLIC ACID AND S-ADENOSYL-L-HOMOCYSTEINE</scope>
    <scope>SUBUNIT</scope>
    <scope>FUNCTION</scope>
    <scope>CATALYTIC ACTIVITY</scope>
    <scope>BIOPHYSICOCHEMICAL PROPERTIES</scope>
    <scope>MUTAGENESIS OF PHE-196; ARG-265; GLN-267; HIS-306 AND GLU-362</scope>
    <scope>ACTIVE SITE</scope>
</reference>
<protein>
    <recommendedName>
        <fullName evidence="6">O-methyltransferase mpaG'</fullName>
        <ecNumber evidence="3 4 5">2.1.1.-</ecNumber>
    </recommendedName>
    <alternativeName>
        <fullName evidence="6">Mycophenolic acid biosynthesis cluster protein G'</fullName>
    </alternativeName>
</protein>
<sequence>MSAASPASIIQELASAAKQYENNESGAREALIAQSRALIASLEVPSEFIQHTFWSQPALSAIVRLATDVNLFQYLKDAQEEGLNAEALASKTGMDVSLFARLARHLVAMNVITSRNGVFYGTALSNGLAAENYQQSIRFCHDVSRPSFGAFPSFFKGNGYKTPALGTTDGPFQSAHKVDISFPQWLVGNPPYLQYFNSYMSAYRAGKPNWCDNGFYPVADRLLNGFDASVSDVLLVDVGGGRGHDIATFGSQFSPLPGRLVLQDREQVINSIPADESRQFEATTHDIFTTQPVKHARAYYMHSVPHGFGDEDAVKIMANLVPALAKGYSRVLLNEIVVDEERPVMSATNMDLIMLAHMGAKERTEADWRSILTRAGLKVVNIYSYPGVAESLIEAELA</sequence>
<gene>
    <name evidence="6" type="primary">mpaG'</name>
</gene>
<proteinExistence type="evidence at protein level"/>
<name>MPAG2_PENBR</name>
<keyword id="KW-0002">3D-structure</keyword>
<keyword id="KW-0963">Cytoplasm</keyword>
<keyword id="KW-0489">Methyltransferase</keyword>
<keyword id="KW-0949">S-adenosyl-L-methionine</keyword>
<keyword id="KW-0808">Transferase</keyword>
<organism>
    <name type="scientific">Penicillium brevicompactum</name>
    <dbReference type="NCBI Taxonomy" id="5074"/>
    <lineage>
        <taxon>Eukaryota</taxon>
        <taxon>Fungi</taxon>
        <taxon>Dikarya</taxon>
        <taxon>Ascomycota</taxon>
        <taxon>Pezizomycotina</taxon>
        <taxon>Eurotiomycetes</taxon>
        <taxon>Eurotiomycetidae</taxon>
        <taxon>Eurotiales</taxon>
        <taxon>Aspergillaceae</taxon>
        <taxon>Penicillium</taxon>
    </lineage>
</organism>